<keyword id="KW-0030">Aminoacyl-tRNA synthetase</keyword>
<keyword id="KW-0067">ATP-binding</keyword>
<keyword id="KW-0963">Cytoplasm</keyword>
<keyword id="KW-0436">Ligase</keyword>
<keyword id="KW-0547">Nucleotide-binding</keyword>
<keyword id="KW-0648">Protein biosynthesis</keyword>
<accession>Q3JYL7</accession>
<organism>
    <name type="scientific">Streptococcus agalactiae serotype Ia (strain ATCC 27591 / A909 / CDC SS700)</name>
    <dbReference type="NCBI Taxonomy" id="205921"/>
    <lineage>
        <taxon>Bacteria</taxon>
        <taxon>Bacillati</taxon>
        <taxon>Bacillota</taxon>
        <taxon>Bacilli</taxon>
        <taxon>Lactobacillales</taxon>
        <taxon>Streptococcaceae</taxon>
        <taxon>Streptococcus</taxon>
    </lineage>
</organism>
<comment type="function">
    <text evidence="1">Catalyzes the attachment of L-aspartate to tRNA(Asp) in a two-step reaction: L-aspartate is first activated by ATP to form Asp-AMP and then transferred to the acceptor end of tRNA(Asp).</text>
</comment>
<comment type="catalytic activity">
    <reaction evidence="1">
        <text>tRNA(Asp) + L-aspartate + ATP = L-aspartyl-tRNA(Asp) + AMP + diphosphate</text>
        <dbReference type="Rhea" id="RHEA:19649"/>
        <dbReference type="Rhea" id="RHEA-COMP:9660"/>
        <dbReference type="Rhea" id="RHEA-COMP:9678"/>
        <dbReference type="ChEBI" id="CHEBI:29991"/>
        <dbReference type="ChEBI" id="CHEBI:30616"/>
        <dbReference type="ChEBI" id="CHEBI:33019"/>
        <dbReference type="ChEBI" id="CHEBI:78442"/>
        <dbReference type="ChEBI" id="CHEBI:78516"/>
        <dbReference type="ChEBI" id="CHEBI:456215"/>
        <dbReference type="EC" id="6.1.1.12"/>
    </reaction>
</comment>
<comment type="subunit">
    <text evidence="1">Homodimer.</text>
</comment>
<comment type="subcellular location">
    <subcellularLocation>
        <location evidence="1">Cytoplasm</location>
    </subcellularLocation>
</comment>
<comment type="similarity">
    <text evidence="1">Belongs to the class-II aminoacyl-tRNA synthetase family. Type 1 subfamily.</text>
</comment>
<gene>
    <name evidence="1" type="primary">aspS</name>
    <name type="ordered locus">SAK_2046</name>
</gene>
<sequence>MKRSMYAGRVRSEHIGTSITLKGWVGRRRDLGGLIFIDLRDREGIMQLVINPEEVSASVMATAESLRSEFVIEVSGVVTAREQANDNLPTGEVELKVQELSVLNTSKTTPFEIKDGIEANDDTRMRYRYLDLRRPEMLENFKLRAKVTHSIRNYLDNLEFIDVETPMLTKSTPEGARDYLVPSRVNQGHFYALPQSPQITKQLLMNAGFDRYYQIVKCFRDEDLRGDRQPEFTQVDLETSFLSDQEIQDIVEGMIAKVMKDTKGLEVSLPFPRMAYDDAMNNYGSDKPDTRFDMLLQDLTEVVKEVDFKVFSEASVVKAIVVKNKADKYSRKNIDKLTEIAKQYGAKGLAWLKYADNTISGPVAKFLTAIEDRLTEALQLENNDLILFVADSLEVANETLGALRTRIAKELELIDYSKFNFLWIVDWPMFEWSEEEGRYMSAHHPFTLPTAETAHELEGDLAKVRAVAYDIVLNGYELGGGSLRINQKDTQERMFKALGFSAESAQEQFGFLLEAMDYGFPPHGGLAIGLDRFVMLLAGKDNIREVIAFPKNNKASDPMTQAPSLVSEQQLEELSLTVESYEN</sequence>
<protein>
    <recommendedName>
        <fullName evidence="1">Aspartate--tRNA ligase</fullName>
        <ecNumber evidence="1">6.1.1.12</ecNumber>
    </recommendedName>
    <alternativeName>
        <fullName evidence="1">Aspartyl-tRNA synthetase</fullName>
        <shortName evidence="1">AspRS</shortName>
    </alternativeName>
</protein>
<name>SYD_STRA1</name>
<feature type="chain" id="PRO_0000235564" description="Aspartate--tRNA ligase">
    <location>
        <begin position="1"/>
        <end position="583"/>
    </location>
</feature>
<feature type="region of interest" description="Aspartate" evidence="1">
    <location>
        <begin position="198"/>
        <end position="201"/>
    </location>
</feature>
<feature type="binding site" evidence="1">
    <location>
        <position position="174"/>
    </location>
    <ligand>
        <name>L-aspartate</name>
        <dbReference type="ChEBI" id="CHEBI:29991"/>
    </ligand>
</feature>
<feature type="binding site" evidence="1">
    <location>
        <begin position="220"/>
        <end position="222"/>
    </location>
    <ligand>
        <name>ATP</name>
        <dbReference type="ChEBI" id="CHEBI:30616"/>
    </ligand>
</feature>
<feature type="binding site" evidence="1">
    <location>
        <position position="220"/>
    </location>
    <ligand>
        <name>L-aspartate</name>
        <dbReference type="ChEBI" id="CHEBI:29991"/>
    </ligand>
</feature>
<feature type="binding site" evidence="1">
    <location>
        <position position="229"/>
    </location>
    <ligand>
        <name>ATP</name>
        <dbReference type="ChEBI" id="CHEBI:30616"/>
    </ligand>
</feature>
<feature type="binding site" evidence="1">
    <location>
        <position position="443"/>
    </location>
    <ligand>
        <name>L-aspartate</name>
        <dbReference type="ChEBI" id="CHEBI:29991"/>
    </ligand>
</feature>
<feature type="binding site" evidence="1">
    <location>
        <position position="477"/>
    </location>
    <ligand>
        <name>ATP</name>
        <dbReference type="ChEBI" id="CHEBI:30616"/>
    </ligand>
</feature>
<feature type="binding site" evidence="1">
    <location>
        <position position="484"/>
    </location>
    <ligand>
        <name>L-aspartate</name>
        <dbReference type="ChEBI" id="CHEBI:29991"/>
    </ligand>
</feature>
<feature type="binding site" evidence="1">
    <location>
        <begin position="529"/>
        <end position="532"/>
    </location>
    <ligand>
        <name>ATP</name>
        <dbReference type="ChEBI" id="CHEBI:30616"/>
    </ligand>
</feature>
<dbReference type="EC" id="6.1.1.12" evidence="1"/>
<dbReference type="EMBL" id="CP000114">
    <property type="protein sequence ID" value="ABA46260.1"/>
    <property type="molecule type" value="Genomic_DNA"/>
</dbReference>
<dbReference type="RefSeq" id="WP_000830936.1">
    <property type="nucleotide sequence ID" value="NC_007432.1"/>
</dbReference>
<dbReference type="SMR" id="Q3JYL7"/>
<dbReference type="KEGG" id="sak:SAK_2046"/>
<dbReference type="HOGENOM" id="CLU_014330_3_2_9"/>
<dbReference type="GO" id="GO:0005737">
    <property type="term" value="C:cytoplasm"/>
    <property type="evidence" value="ECO:0007669"/>
    <property type="project" value="UniProtKB-SubCell"/>
</dbReference>
<dbReference type="GO" id="GO:0004815">
    <property type="term" value="F:aspartate-tRNA ligase activity"/>
    <property type="evidence" value="ECO:0007669"/>
    <property type="project" value="UniProtKB-UniRule"/>
</dbReference>
<dbReference type="GO" id="GO:0005524">
    <property type="term" value="F:ATP binding"/>
    <property type="evidence" value="ECO:0007669"/>
    <property type="project" value="UniProtKB-UniRule"/>
</dbReference>
<dbReference type="GO" id="GO:0140096">
    <property type="term" value="F:catalytic activity, acting on a protein"/>
    <property type="evidence" value="ECO:0007669"/>
    <property type="project" value="UniProtKB-ARBA"/>
</dbReference>
<dbReference type="GO" id="GO:0003676">
    <property type="term" value="F:nucleic acid binding"/>
    <property type="evidence" value="ECO:0007669"/>
    <property type="project" value="InterPro"/>
</dbReference>
<dbReference type="GO" id="GO:0016740">
    <property type="term" value="F:transferase activity"/>
    <property type="evidence" value="ECO:0007669"/>
    <property type="project" value="UniProtKB-ARBA"/>
</dbReference>
<dbReference type="GO" id="GO:0006422">
    <property type="term" value="P:aspartyl-tRNA aminoacylation"/>
    <property type="evidence" value="ECO:0007669"/>
    <property type="project" value="UniProtKB-UniRule"/>
</dbReference>
<dbReference type="CDD" id="cd00777">
    <property type="entry name" value="AspRS_core"/>
    <property type="match status" value="1"/>
</dbReference>
<dbReference type="CDD" id="cd04317">
    <property type="entry name" value="EcAspRS_like_N"/>
    <property type="match status" value="1"/>
</dbReference>
<dbReference type="Gene3D" id="3.30.930.10">
    <property type="entry name" value="Bira Bifunctional Protein, Domain 2"/>
    <property type="match status" value="1"/>
</dbReference>
<dbReference type="Gene3D" id="3.30.1360.30">
    <property type="entry name" value="GAD-like domain"/>
    <property type="match status" value="1"/>
</dbReference>
<dbReference type="Gene3D" id="2.40.50.140">
    <property type="entry name" value="Nucleic acid-binding proteins"/>
    <property type="match status" value="1"/>
</dbReference>
<dbReference type="HAMAP" id="MF_00044">
    <property type="entry name" value="Asp_tRNA_synth_type1"/>
    <property type="match status" value="1"/>
</dbReference>
<dbReference type="InterPro" id="IPR004364">
    <property type="entry name" value="Aa-tRNA-synt_II"/>
</dbReference>
<dbReference type="InterPro" id="IPR006195">
    <property type="entry name" value="aa-tRNA-synth_II"/>
</dbReference>
<dbReference type="InterPro" id="IPR045864">
    <property type="entry name" value="aa-tRNA-synth_II/BPL/LPL"/>
</dbReference>
<dbReference type="InterPro" id="IPR004524">
    <property type="entry name" value="Asp-tRNA-ligase_1"/>
</dbReference>
<dbReference type="InterPro" id="IPR047089">
    <property type="entry name" value="Asp-tRNA-ligase_1_N"/>
</dbReference>
<dbReference type="InterPro" id="IPR002312">
    <property type="entry name" value="Asp/Asn-tRNA-synth_IIb"/>
</dbReference>
<dbReference type="InterPro" id="IPR047090">
    <property type="entry name" value="AspRS_core"/>
</dbReference>
<dbReference type="InterPro" id="IPR004115">
    <property type="entry name" value="GAD-like_sf"/>
</dbReference>
<dbReference type="InterPro" id="IPR029351">
    <property type="entry name" value="GAD_dom"/>
</dbReference>
<dbReference type="InterPro" id="IPR012340">
    <property type="entry name" value="NA-bd_OB-fold"/>
</dbReference>
<dbReference type="InterPro" id="IPR004365">
    <property type="entry name" value="NA-bd_OB_tRNA"/>
</dbReference>
<dbReference type="NCBIfam" id="TIGR00459">
    <property type="entry name" value="aspS_bact"/>
    <property type="match status" value="1"/>
</dbReference>
<dbReference type="NCBIfam" id="NF001750">
    <property type="entry name" value="PRK00476.1"/>
    <property type="match status" value="1"/>
</dbReference>
<dbReference type="PANTHER" id="PTHR22594:SF5">
    <property type="entry name" value="ASPARTATE--TRNA LIGASE, MITOCHONDRIAL"/>
    <property type="match status" value="1"/>
</dbReference>
<dbReference type="PANTHER" id="PTHR22594">
    <property type="entry name" value="ASPARTYL/LYSYL-TRNA SYNTHETASE"/>
    <property type="match status" value="1"/>
</dbReference>
<dbReference type="Pfam" id="PF02938">
    <property type="entry name" value="GAD"/>
    <property type="match status" value="1"/>
</dbReference>
<dbReference type="Pfam" id="PF00152">
    <property type="entry name" value="tRNA-synt_2"/>
    <property type="match status" value="1"/>
</dbReference>
<dbReference type="Pfam" id="PF01336">
    <property type="entry name" value="tRNA_anti-codon"/>
    <property type="match status" value="1"/>
</dbReference>
<dbReference type="PRINTS" id="PR01042">
    <property type="entry name" value="TRNASYNTHASP"/>
</dbReference>
<dbReference type="SUPFAM" id="SSF55681">
    <property type="entry name" value="Class II aaRS and biotin synthetases"/>
    <property type="match status" value="1"/>
</dbReference>
<dbReference type="SUPFAM" id="SSF55261">
    <property type="entry name" value="GAD domain-like"/>
    <property type="match status" value="1"/>
</dbReference>
<dbReference type="SUPFAM" id="SSF50249">
    <property type="entry name" value="Nucleic acid-binding proteins"/>
    <property type="match status" value="1"/>
</dbReference>
<dbReference type="PROSITE" id="PS50862">
    <property type="entry name" value="AA_TRNA_LIGASE_II"/>
    <property type="match status" value="1"/>
</dbReference>
<reference key="1">
    <citation type="journal article" date="2005" name="Proc. Natl. Acad. Sci. U.S.A.">
        <title>Genome analysis of multiple pathogenic isolates of Streptococcus agalactiae: implications for the microbial 'pan-genome'.</title>
        <authorList>
            <person name="Tettelin H."/>
            <person name="Masignani V."/>
            <person name="Cieslewicz M.J."/>
            <person name="Donati C."/>
            <person name="Medini D."/>
            <person name="Ward N.L."/>
            <person name="Angiuoli S.V."/>
            <person name="Crabtree J."/>
            <person name="Jones A.L."/>
            <person name="Durkin A.S."/>
            <person name="DeBoy R.T."/>
            <person name="Davidsen T.M."/>
            <person name="Mora M."/>
            <person name="Scarselli M."/>
            <person name="Margarit y Ros I."/>
            <person name="Peterson J.D."/>
            <person name="Hauser C.R."/>
            <person name="Sundaram J.P."/>
            <person name="Nelson W.C."/>
            <person name="Madupu R."/>
            <person name="Brinkac L.M."/>
            <person name="Dodson R.J."/>
            <person name="Rosovitz M.J."/>
            <person name="Sullivan S.A."/>
            <person name="Daugherty S.C."/>
            <person name="Haft D.H."/>
            <person name="Selengut J."/>
            <person name="Gwinn M.L."/>
            <person name="Zhou L."/>
            <person name="Zafar N."/>
            <person name="Khouri H."/>
            <person name="Radune D."/>
            <person name="Dimitrov G."/>
            <person name="Watkins K."/>
            <person name="O'Connor K.J."/>
            <person name="Smith S."/>
            <person name="Utterback T.R."/>
            <person name="White O."/>
            <person name="Rubens C.E."/>
            <person name="Grandi G."/>
            <person name="Madoff L.C."/>
            <person name="Kasper D.L."/>
            <person name="Telford J.L."/>
            <person name="Wessels M.R."/>
            <person name="Rappuoli R."/>
            <person name="Fraser C.M."/>
        </authorList>
    </citation>
    <scope>NUCLEOTIDE SEQUENCE [LARGE SCALE GENOMIC DNA]</scope>
    <source>
        <strain>ATCC 27591 / A909 / CDC SS700</strain>
    </source>
</reference>
<evidence type="ECO:0000255" key="1">
    <source>
        <dbReference type="HAMAP-Rule" id="MF_00044"/>
    </source>
</evidence>
<proteinExistence type="inferred from homology"/>